<reference evidence="4" key="1">
    <citation type="submission" date="2004-10" db="EMBL/GenBank/DDBJ databases">
        <authorList>
            <consortium name="NIH - Xenopus Gene Collection (XGC) project"/>
        </authorList>
    </citation>
    <scope>NUCLEOTIDE SEQUENCE [LARGE SCALE MRNA]</scope>
    <source>
        <tissue evidence="4">Gastrula</tissue>
    </source>
</reference>
<evidence type="ECO:0000250" key="1"/>
<evidence type="ECO:0000250" key="2">
    <source>
        <dbReference type="UniProtKB" id="Q99967"/>
    </source>
</evidence>
<evidence type="ECO:0000255" key="3"/>
<evidence type="ECO:0000312" key="4">
    <source>
        <dbReference type="EMBL" id="AAH84310.1"/>
    </source>
</evidence>
<organism>
    <name type="scientific">Xenopus laevis</name>
    <name type="common">African clawed frog</name>
    <dbReference type="NCBI Taxonomy" id="8355"/>
    <lineage>
        <taxon>Eukaryota</taxon>
        <taxon>Metazoa</taxon>
        <taxon>Chordata</taxon>
        <taxon>Craniata</taxon>
        <taxon>Vertebrata</taxon>
        <taxon>Euteleostomi</taxon>
        <taxon>Amphibia</taxon>
        <taxon>Batrachia</taxon>
        <taxon>Anura</taxon>
        <taxon>Pipoidea</taxon>
        <taxon>Pipidae</taxon>
        <taxon>Xenopodinae</taxon>
        <taxon>Xenopus</taxon>
        <taxon>Xenopus</taxon>
    </lineage>
</organism>
<sequence length="225" mass="25184">MADHMMAMNHSRFQDGTNGLHHPAHRMGMGQFPSPHHHQHTFNSLMGEHMHYVPGNMNSNNSIRHAMVTGNVNGGHPNGSIAPAARFNNSQFMGPPVTNQGAQLTASMQLQKLNNQYFTHQPYPHNHYIPDLHPTNHPLNGTNQHFKECNPKHSTGLPPSVSHVPAAILPPGVIDTDFIDEEVLMSLVIEMGLDRIKELPELWLGQNEFDFMTDFVCKQPNRVSC</sequence>
<dbReference type="EMBL" id="BC084310">
    <property type="protein sequence ID" value="AAH84310.1"/>
    <property type="molecule type" value="mRNA"/>
</dbReference>
<dbReference type="RefSeq" id="NP_001088289.1">
    <property type="nucleotide sequence ID" value="NM_001094820.1"/>
</dbReference>
<dbReference type="BioGRID" id="105204">
    <property type="interactions" value="1"/>
</dbReference>
<dbReference type="DNASU" id="495124"/>
<dbReference type="GeneID" id="495124"/>
<dbReference type="KEGG" id="xla:495124"/>
<dbReference type="AGR" id="Xenbase:XB-GENE-866410"/>
<dbReference type="CTD" id="495124"/>
<dbReference type="Xenbase" id="XB-GENE-866410">
    <property type="gene designation" value="cited2.L"/>
</dbReference>
<dbReference type="OMA" id="MSDHIHY"/>
<dbReference type="OrthoDB" id="10025072at2759"/>
<dbReference type="Proteomes" id="UP000186698">
    <property type="component" value="Chromosome 5L"/>
</dbReference>
<dbReference type="Bgee" id="495124">
    <property type="expression patterns" value="Expressed in egg cell and 19 other cell types or tissues"/>
</dbReference>
<dbReference type="GO" id="GO:0005634">
    <property type="term" value="C:nucleus"/>
    <property type="evidence" value="ECO:0000318"/>
    <property type="project" value="GO_Central"/>
</dbReference>
<dbReference type="GO" id="GO:0003713">
    <property type="term" value="F:transcription coactivator activity"/>
    <property type="evidence" value="ECO:0000318"/>
    <property type="project" value="GO_Central"/>
</dbReference>
<dbReference type="GO" id="GO:0030154">
    <property type="term" value="P:cell differentiation"/>
    <property type="evidence" value="ECO:0007669"/>
    <property type="project" value="UniProtKB-KW"/>
</dbReference>
<dbReference type="GO" id="GO:0060972">
    <property type="term" value="P:left/right pattern formation"/>
    <property type="evidence" value="ECO:0000318"/>
    <property type="project" value="GO_Central"/>
</dbReference>
<dbReference type="GO" id="GO:0007530">
    <property type="term" value="P:sex determination"/>
    <property type="evidence" value="ECO:0000318"/>
    <property type="project" value="GO_Central"/>
</dbReference>
<dbReference type="FunFam" id="6.10.140.2200:FF:000001">
    <property type="entry name" value="Cbp/p300-interacting transactivator 2 isoform 1"/>
    <property type="match status" value="1"/>
</dbReference>
<dbReference type="Gene3D" id="6.10.140.2200">
    <property type="match status" value="1"/>
</dbReference>
<dbReference type="InterPro" id="IPR007576">
    <property type="entry name" value="CITED"/>
</dbReference>
<dbReference type="PANTHER" id="PTHR17045:SF7">
    <property type="entry name" value="CBP_P300-INTERACTING TRANSACTIVATOR 2"/>
    <property type="match status" value="1"/>
</dbReference>
<dbReference type="PANTHER" id="PTHR17045">
    <property type="entry name" value="MELANOCYTE SPECIFIC GENE RELATED CITED"/>
    <property type="match status" value="1"/>
</dbReference>
<dbReference type="Pfam" id="PF04487">
    <property type="entry name" value="CITED"/>
    <property type="match status" value="1"/>
</dbReference>
<keyword id="KW-0010">Activator</keyword>
<keyword id="KW-0217">Developmental protein</keyword>
<keyword id="KW-0221">Differentiation</keyword>
<keyword id="KW-0539">Nucleus</keyword>
<keyword id="KW-1185">Reference proteome</keyword>
<keyword id="KW-0678">Repressor</keyword>
<keyword id="KW-0804">Transcription</keyword>
<keyword id="KW-0805">Transcription regulation</keyword>
<comment type="function">
    <text evidence="1">Transcriptional coactivator or corepressor of the p300/CBP-mediated transcription complex. May be involved in sex determination, early gonad development, left-right patterning during embryogenesis and differentiation of the adrenal cortex (By similarity).</text>
</comment>
<comment type="subcellular location">
    <subcellularLocation>
        <location evidence="2">Nucleus</location>
    </subcellularLocation>
</comment>
<comment type="similarity">
    <text evidence="3">Belongs to the CITED family.</text>
</comment>
<accession>Q5XGW7</accession>
<gene>
    <name type="primary">cited2</name>
</gene>
<protein>
    <recommendedName>
        <fullName evidence="2">Cbp/p300-interacting transactivator 2</fullName>
    </recommendedName>
</protein>
<name>CITE2_XENLA</name>
<feature type="chain" id="PRO_0000390735" description="Cbp/p300-interacting transactivator 2">
    <location>
        <begin position="1"/>
        <end position="225"/>
    </location>
</feature>
<proteinExistence type="evidence at transcript level"/>